<gene>
    <name evidence="1" type="primary">nadK</name>
    <name type="ordered locus">Bcen_0260</name>
</gene>
<evidence type="ECO:0000255" key="1">
    <source>
        <dbReference type="HAMAP-Rule" id="MF_00361"/>
    </source>
</evidence>
<sequence>MKTGNQFKTVALVGRSNTPGIAEPLATLADSIATLGFEVVFEGDTAREIGIAGYPALTPAEIGARADVAIVLGGDGTMLGIGRQLAPYRTPLIGINHGRLGFITDIAASDMQALVPVMLAGKFEREERSLLEARIVRDGEPIYHALAFNDVVVNRSGFSGMVELRASVDGRYMYNQRSDGLIVATPTGSTAYALSSAGPILHPQLAGVVLVPIAPHALSNRPIVLPDDSKIAIQIVGGRDVNVNFDMQSFTSLELNDTIEVRRSKHTVPFLHPIGYSYYTTLRKKLHWNEHASNEDDKAS</sequence>
<dbReference type="EC" id="2.7.1.23" evidence="1"/>
<dbReference type="EMBL" id="CP000378">
    <property type="protein sequence ID" value="ABF75174.1"/>
    <property type="molecule type" value="Genomic_DNA"/>
</dbReference>
<dbReference type="SMR" id="Q1BYY1"/>
<dbReference type="HOGENOM" id="CLU_008831_0_1_4"/>
<dbReference type="GO" id="GO:0005737">
    <property type="term" value="C:cytoplasm"/>
    <property type="evidence" value="ECO:0007669"/>
    <property type="project" value="UniProtKB-SubCell"/>
</dbReference>
<dbReference type="GO" id="GO:0005524">
    <property type="term" value="F:ATP binding"/>
    <property type="evidence" value="ECO:0007669"/>
    <property type="project" value="UniProtKB-KW"/>
</dbReference>
<dbReference type="GO" id="GO:0046872">
    <property type="term" value="F:metal ion binding"/>
    <property type="evidence" value="ECO:0007669"/>
    <property type="project" value="UniProtKB-UniRule"/>
</dbReference>
<dbReference type="GO" id="GO:0051287">
    <property type="term" value="F:NAD binding"/>
    <property type="evidence" value="ECO:0007669"/>
    <property type="project" value="UniProtKB-ARBA"/>
</dbReference>
<dbReference type="GO" id="GO:0003951">
    <property type="term" value="F:NAD+ kinase activity"/>
    <property type="evidence" value="ECO:0007669"/>
    <property type="project" value="UniProtKB-UniRule"/>
</dbReference>
<dbReference type="GO" id="GO:0019674">
    <property type="term" value="P:NAD metabolic process"/>
    <property type="evidence" value="ECO:0007669"/>
    <property type="project" value="InterPro"/>
</dbReference>
<dbReference type="GO" id="GO:0006741">
    <property type="term" value="P:NADP biosynthetic process"/>
    <property type="evidence" value="ECO:0007669"/>
    <property type="project" value="UniProtKB-UniRule"/>
</dbReference>
<dbReference type="Gene3D" id="3.40.50.10330">
    <property type="entry name" value="Probable inorganic polyphosphate/atp-NAD kinase, domain 1"/>
    <property type="match status" value="1"/>
</dbReference>
<dbReference type="Gene3D" id="2.60.200.30">
    <property type="entry name" value="Probable inorganic polyphosphate/atp-NAD kinase, domain 2"/>
    <property type="match status" value="1"/>
</dbReference>
<dbReference type="HAMAP" id="MF_00361">
    <property type="entry name" value="NAD_kinase"/>
    <property type="match status" value="1"/>
</dbReference>
<dbReference type="InterPro" id="IPR017438">
    <property type="entry name" value="ATP-NAD_kinase_N"/>
</dbReference>
<dbReference type="InterPro" id="IPR017437">
    <property type="entry name" value="ATP-NAD_kinase_PpnK-typ_C"/>
</dbReference>
<dbReference type="InterPro" id="IPR016064">
    <property type="entry name" value="NAD/diacylglycerol_kinase_sf"/>
</dbReference>
<dbReference type="InterPro" id="IPR002504">
    <property type="entry name" value="NADK"/>
</dbReference>
<dbReference type="NCBIfam" id="NF002561">
    <property type="entry name" value="PRK02155.1"/>
    <property type="match status" value="1"/>
</dbReference>
<dbReference type="PANTHER" id="PTHR20275">
    <property type="entry name" value="NAD KINASE"/>
    <property type="match status" value="1"/>
</dbReference>
<dbReference type="PANTHER" id="PTHR20275:SF0">
    <property type="entry name" value="NAD KINASE"/>
    <property type="match status" value="1"/>
</dbReference>
<dbReference type="Pfam" id="PF01513">
    <property type="entry name" value="NAD_kinase"/>
    <property type="match status" value="1"/>
</dbReference>
<dbReference type="Pfam" id="PF20143">
    <property type="entry name" value="NAD_kinase_C"/>
    <property type="match status" value="1"/>
</dbReference>
<dbReference type="SUPFAM" id="SSF111331">
    <property type="entry name" value="NAD kinase/diacylglycerol kinase-like"/>
    <property type="match status" value="1"/>
</dbReference>
<comment type="function">
    <text evidence="1">Involved in the regulation of the intracellular balance of NAD and NADP, and is a key enzyme in the biosynthesis of NADP. Catalyzes specifically the phosphorylation on 2'-hydroxyl of the adenosine moiety of NAD to yield NADP.</text>
</comment>
<comment type="catalytic activity">
    <reaction evidence="1">
        <text>NAD(+) + ATP = ADP + NADP(+) + H(+)</text>
        <dbReference type="Rhea" id="RHEA:18629"/>
        <dbReference type="ChEBI" id="CHEBI:15378"/>
        <dbReference type="ChEBI" id="CHEBI:30616"/>
        <dbReference type="ChEBI" id="CHEBI:57540"/>
        <dbReference type="ChEBI" id="CHEBI:58349"/>
        <dbReference type="ChEBI" id="CHEBI:456216"/>
        <dbReference type="EC" id="2.7.1.23"/>
    </reaction>
</comment>
<comment type="cofactor">
    <cofactor evidence="1">
        <name>a divalent metal cation</name>
        <dbReference type="ChEBI" id="CHEBI:60240"/>
    </cofactor>
</comment>
<comment type="subcellular location">
    <subcellularLocation>
        <location evidence="1">Cytoplasm</location>
    </subcellularLocation>
</comment>
<comment type="similarity">
    <text evidence="1">Belongs to the NAD kinase family.</text>
</comment>
<keyword id="KW-0067">ATP-binding</keyword>
<keyword id="KW-0963">Cytoplasm</keyword>
<keyword id="KW-0418">Kinase</keyword>
<keyword id="KW-0520">NAD</keyword>
<keyword id="KW-0521">NADP</keyword>
<keyword id="KW-0547">Nucleotide-binding</keyword>
<keyword id="KW-0808">Transferase</keyword>
<reference key="1">
    <citation type="submission" date="2006-05" db="EMBL/GenBank/DDBJ databases">
        <title>Complete sequence of chromosome 1 of Burkholderia cenocepacia AU 1054.</title>
        <authorList>
            <consortium name="US DOE Joint Genome Institute"/>
            <person name="Copeland A."/>
            <person name="Lucas S."/>
            <person name="Lapidus A."/>
            <person name="Barry K."/>
            <person name="Detter J.C."/>
            <person name="Glavina del Rio T."/>
            <person name="Hammon N."/>
            <person name="Israni S."/>
            <person name="Dalin E."/>
            <person name="Tice H."/>
            <person name="Pitluck S."/>
            <person name="Chain P."/>
            <person name="Malfatti S."/>
            <person name="Shin M."/>
            <person name="Vergez L."/>
            <person name="Schmutz J."/>
            <person name="Larimer F."/>
            <person name="Land M."/>
            <person name="Hauser L."/>
            <person name="Kyrpides N."/>
            <person name="Lykidis A."/>
            <person name="LiPuma J.J."/>
            <person name="Konstantinidis K."/>
            <person name="Tiedje J.M."/>
            <person name="Richardson P."/>
        </authorList>
    </citation>
    <scope>NUCLEOTIDE SEQUENCE [LARGE SCALE GENOMIC DNA]</scope>
    <source>
        <strain>AU 1054</strain>
    </source>
</reference>
<feature type="chain" id="PRO_1000005391" description="NAD kinase">
    <location>
        <begin position="1"/>
        <end position="300"/>
    </location>
</feature>
<feature type="active site" description="Proton acceptor" evidence="1">
    <location>
        <position position="75"/>
    </location>
</feature>
<feature type="binding site" evidence="1">
    <location>
        <begin position="75"/>
        <end position="76"/>
    </location>
    <ligand>
        <name>NAD(+)</name>
        <dbReference type="ChEBI" id="CHEBI:57540"/>
    </ligand>
</feature>
<feature type="binding site" evidence="1">
    <location>
        <begin position="149"/>
        <end position="150"/>
    </location>
    <ligand>
        <name>NAD(+)</name>
        <dbReference type="ChEBI" id="CHEBI:57540"/>
    </ligand>
</feature>
<feature type="binding site" evidence="1">
    <location>
        <position position="177"/>
    </location>
    <ligand>
        <name>NAD(+)</name>
        <dbReference type="ChEBI" id="CHEBI:57540"/>
    </ligand>
</feature>
<feature type="binding site" evidence="1">
    <location>
        <position position="179"/>
    </location>
    <ligand>
        <name>NAD(+)</name>
        <dbReference type="ChEBI" id="CHEBI:57540"/>
    </ligand>
</feature>
<feature type="binding site" evidence="1">
    <location>
        <begin position="190"/>
        <end position="195"/>
    </location>
    <ligand>
        <name>NAD(+)</name>
        <dbReference type="ChEBI" id="CHEBI:57540"/>
    </ligand>
</feature>
<feature type="binding site" evidence="1">
    <location>
        <position position="214"/>
    </location>
    <ligand>
        <name>NAD(+)</name>
        <dbReference type="ChEBI" id="CHEBI:57540"/>
    </ligand>
</feature>
<feature type="binding site" evidence="1">
    <location>
        <position position="248"/>
    </location>
    <ligand>
        <name>NAD(+)</name>
        <dbReference type="ChEBI" id="CHEBI:57540"/>
    </ligand>
</feature>
<proteinExistence type="inferred from homology"/>
<protein>
    <recommendedName>
        <fullName evidence="1">NAD kinase</fullName>
        <ecNumber evidence="1">2.7.1.23</ecNumber>
    </recommendedName>
    <alternativeName>
        <fullName evidence="1">ATP-dependent NAD kinase</fullName>
    </alternativeName>
</protein>
<name>NADK_BURO1</name>
<organism>
    <name type="scientific">Burkholderia orbicola (strain AU 1054)</name>
    <dbReference type="NCBI Taxonomy" id="331271"/>
    <lineage>
        <taxon>Bacteria</taxon>
        <taxon>Pseudomonadati</taxon>
        <taxon>Pseudomonadota</taxon>
        <taxon>Betaproteobacteria</taxon>
        <taxon>Burkholderiales</taxon>
        <taxon>Burkholderiaceae</taxon>
        <taxon>Burkholderia</taxon>
        <taxon>Burkholderia cepacia complex</taxon>
        <taxon>Burkholderia orbicola</taxon>
    </lineage>
</organism>
<accession>Q1BYY1</accession>